<name>LIPB_CALBD</name>
<dbReference type="EC" id="2.3.1.181" evidence="1"/>
<dbReference type="EMBL" id="CP001393">
    <property type="protein sequence ID" value="ACM59815.1"/>
    <property type="molecule type" value="Genomic_DNA"/>
</dbReference>
<dbReference type="RefSeq" id="WP_015907257.1">
    <property type="nucleotide sequence ID" value="NC_012034.1"/>
</dbReference>
<dbReference type="SMR" id="B9MQ23"/>
<dbReference type="STRING" id="521460.Athe_0700"/>
<dbReference type="GeneID" id="31772052"/>
<dbReference type="KEGG" id="ate:Athe_0700"/>
<dbReference type="eggNOG" id="COG0321">
    <property type="taxonomic scope" value="Bacteria"/>
</dbReference>
<dbReference type="HOGENOM" id="CLU_035168_1_3_9"/>
<dbReference type="UniPathway" id="UPA00538">
    <property type="reaction ID" value="UER00592"/>
</dbReference>
<dbReference type="Proteomes" id="UP000007723">
    <property type="component" value="Chromosome"/>
</dbReference>
<dbReference type="GO" id="GO:0005737">
    <property type="term" value="C:cytoplasm"/>
    <property type="evidence" value="ECO:0007669"/>
    <property type="project" value="UniProtKB-SubCell"/>
</dbReference>
<dbReference type="GO" id="GO:0033819">
    <property type="term" value="F:lipoyl(octanoyl) transferase activity"/>
    <property type="evidence" value="ECO:0007669"/>
    <property type="project" value="UniProtKB-EC"/>
</dbReference>
<dbReference type="GO" id="GO:0036211">
    <property type="term" value="P:protein modification process"/>
    <property type="evidence" value="ECO:0007669"/>
    <property type="project" value="InterPro"/>
</dbReference>
<dbReference type="CDD" id="cd16444">
    <property type="entry name" value="LipB"/>
    <property type="match status" value="1"/>
</dbReference>
<dbReference type="Gene3D" id="3.30.930.10">
    <property type="entry name" value="Bira Bifunctional Protein, Domain 2"/>
    <property type="match status" value="1"/>
</dbReference>
<dbReference type="HAMAP" id="MF_00013">
    <property type="entry name" value="LipB"/>
    <property type="match status" value="1"/>
</dbReference>
<dbReference type="InterPro" id="IPR045864">
    <property type="entry name" value="aa-tRNA-synth_II/BPL/LPL"/>
</dbReference>
<dbReference type="InterPro" id="IPR004143">
    <property type="entry name" value="BPL_LPL_catalytic"/>
</dbReference>
<dbReference type="InterPro" id="IPR000544">
    <property type="entry name" value="Octanoyltransferase"/>
</dbReference>
<dbReference type="InterPro" id="IPR020605">
    <property type="entry name" value="Octanoyltransferase_CS"/>
</dbReference>
<dbReference type="NCBIfam" id="TIGR00214">
    <property type="entry name" value="lipB"/>
    <property type="match status" value="1"/>
</dbReference>
<dbReference type="NCBIfam" id="NF010925">
    <property type="entry name" value="PRK14345.1"/>
    <property type="match status" value="1"/>
</dbReference>
<dbReference type="PANTHER" id="PTHR10993:SF7">
    <property type="entry name" value="LIPOYLTRANSFERASE 2, MITOCHONDRIAL-RELATED"/>
    <property type="match status" value="1"/>
</dbReference>
<dbReference type="PANTHER" id="PTHR10993">
    <property type="entry name" value="OCTANOYLTRANSFERASE"/>
    <property type="match status" value="1"/>
</dbReference>
<dbReference type="Pfam" id="PF21948">
    <property type="entry name" value="LplA-B_cat"/>
    <property type="match status" value="1"/>
</dbReference>
<dbReference type="PIRSF" id="PIRSF016262">
    <property type="entry name" value="LPLase"/>
    <property type="match status" value="1"/>
</dbReference>
<dbReference type="SUPFAM" id="SSF55681">
    <property type="entry name" value="Class II aaRS and biotin synthetases"/>
    <property type="match status" value="1"/>
</dbReference>
<dbReference type="PROSITE" id="PS51733">
    <property type="entry name" value="BPL_LPL_CATALYTIC"/>
    <property type="match status" value="1"/>
</dbReference>
<dbReference type="PROSITE" id="PS01313">
    <property type="entry name" value="LIPB"/>
    <property type="match status" value="1"/>
</dbReference>
<comment type="function">
    <text evidence="1">Catalyzes the transfer of endogenously produced octanoic acid from octanoyl-acyl-carrier-protein onto the lipoyl domains of lipoate-dependent enzymes. Lipoyl-ACP can also act as a substrate although octanoyl-ACP is likely to be the physiological substrate.</text>
</comment>
<comment type="catalytic activity">
    <reaction evidence="1">
        <text>octanoyl-[ACP] + L-lysyl-[protein] = N(6)-octanoyl-L-lysyl-[protein] + holo-[ACP] + H(+)</text>
        <dbReference type="Rhea" id="RHEA:17665"/>
        <dbReference type="Rhea" id="RHEA-COMP:9636"/>
        <dbReference type="Rhea" id="RHEA-COMP:9685"/>
        <dbReference type="Rhea" id="RHEA-COMP:9752"/>
        <dbReference type="Rhea" id="RHEA-COMP:9928"/>
        <dbReference type="ChEBI" id="CHEBI:15378"/>
        <dbReference type="ChEBI" id="CHEBI:29969"/>
        <dbReference type="ChEBI" id="CHEBI:64479"/>
        <dbReference type="ChEBI" id="CHEBI:78463"/>
        <dbReference type="ChEBI" id="CHEBI:78809"/>
        <dbReference type="EC" id="2.3.1.181"/>
    </reaction>
</comment>
<comment type="pathway">
    <text evidence="1">Protein modification; protein lipoylation via endogenous pathway; protein N(6)-(lipoyl)lysine from octanoyl-[acyl-carrier-protein]: step 1/2.</text>
</comment>
<comment type="subcellular location">
    <subcellularLocation>
        <location evidence="1">Cytoplasm</location>
    </subcellularLocation>
</comment>
<comment type="miscellaneous">
    <text evidence="1">In the reaction, the free carboxyl group of octanoic acid is attached via an amide linkage to the epsilon-amino group of a specific lysine residue of lipoyl domains of lipoate-dependent enzymes.</text>
</comment>
<comment type="similarity">
    <text evidence="1">Belongs to the LipB family.</text>
</comment>
<keyword id="KW-0012">Acyltransferase</keyword>
<keyword id="KW-0963">Cytoplasm</keyword>
<keyword id="KW-0808">Transferase</keyword>
<gene>
    <name evidence="1" type="primary">lipB</name>
    <name type="ordered locus">Athe_0700</name>
</gene>
<proteinExistence type="inferred from homology"/>
<protein>
    <recommendedName>
        <fullName evidence="1">Octanoyltransferase</fullName>
        <ecNumber evidence="1">2.3.1.181</ecNumber>
    </recommendedName>
    <alternativeName>
        <fullName evidence="1">Lipoate-protein ligase B</fullName>
    </alternativeName>
    <alternativeName>
        <fullName evidence="1">Lipoyl/octanoyl transferase</fullName>
    </alternativeName>
    <alternativeName>
        <fullName evidence="1">Octanoyl-[acyl-carrier-protein]-protein N-octanoyltransferase</fullName>
    </alternativeName>
</protein>
<organism>
    <name type="scientific">Caldicellulosiruptor bescii (strain ATCC BAA-1888 / DSM 6725 / KCTC 15123 / Z-1320)</name>
    <name type="common">Anaerocellum thermophilum</name>
    <dbReference type="NCBI Taxonomy" id="521460"/>
    <lineage>
        <taxon>Bacteria</taxon>
        <taxon>Bacillati</taxon>
        <taxon>Bacillota</taxon>
        <taxon>Bacillota incertae sedis</taxon>
        <taxon>Caldicellulosiruptorales</taxon>
        <taxon>Caldicellulosiruptoraceae</taxon>
        <taxon>Caldicellulosiruptor</taxon>
    </lineage>
</organism>
<reference key="1">
    <citation type="submission" date="2009-01" db="EMBL/GenBank/DDBJ databases">
        <title>Complete sequence of chromosome of Caldicellulosiruptor becscii DSM 6725.</title>
        <authorList>
            <person name="Lucas S."/>
            <person name="Copeland A."/>
            <person name="Lapidus A."/>
            <person name="Glavina del Rio T."/>
            <person name="Tice H."/>
            <person name="Bruce D."/>
            <person name="Goodwin L."/>
            <person name="Pitluck S."/>
            <person name="Sims D."/>
            <person name="Meincke L."/>
            <person name="Brettin T."/>
            <person name="Detter J.C."/>
            <person name="Han C."/>
            <person name="Larimer F."/>
            <person name="Land M."/>
            <person name="Hauser L."/>
            <person name="Kyrpides N."/>
            <person name="Ovchinnikova G."/>
            <person name="Kataeva I."/>
            <person name="Adams M.W.W."/>
        </authorList>
    </citation>
    <scope>NUCLEOTIDE SEQUENCE [LARGE SCALE GENOMIC DNA]</scope>
    <source>
        <strain>ATCC BAA-1888 / DSM 6725 / KCTC 15123 / Z-1320</strain>
    </source>
</reference>
<sequence length="228" mass="26113">MCINVCYLGEVEYQEALFIQERIWALRVEKKIGDTLLLLEHPPVITIGRRGSKKNILVSDEFLKKMDVKVFEVSRGGDVTYHGPGQLVGYPIFDLALTDRDIKKFVYLLEEVFIRLLKDQFGKEAHRDENKYTGVWVGNDKIVAIGIAVKKWVTMHGFAFNVNTNLEHFSWIVPCGLKDRGVTSLERLIGSTIRFEDVVDKVQTYFGKVFGKSLNILGKEKLFDLLKI</sequence>
<accession>B9MQ23</accession>
<feature type="chain" id="PRO_1000116537" description="Octanoyltransferase">
    <location>
        <begin position="1"/>
        <end position="228"/>
    </location>
</feature>
<feature type="domain" description="BPL/LPL catalytic" evidence="2">
    <location>
        <begin position="30"/>
        <end position="214"/>
    </location>
</feature>
<feature type="active site" description="Acyl-thioester intermediate" evidence="1">
    <location>
        <position position="175"/>
    </location>
</feature>
<feature type="binding site" evidence="1">
    <location>
        <begin position="75"/>
        <end position="82"/>
    </location>
    <ligand>
        <name>substrate</name>
    </ligand>
</feature>
<feature type="binding site" evidence="1">
    <location>
        <begin position="144"/>
        <end position="146"/>
    </location>
    <ligand>
        <name>substrate</name>
    </ligand>
</feature>
<feature type="binding site" evidence="1">
    <location>
        <begin position="157"/>
        <end position="159"/>
    </location>
    <ligand>
        <name>substrate</name>
    </ligand>
</feature>
<feature type="site" description="Lowers pKa of active site Cys" evidence="1">
    <location>
        <position position="141"/>
    </location>
</feature>
<evidence type="ECO:0000255" key="1">
    <source>
        <dbReference type="HAMAP-Rule" id="MF_00013"/>
    </source>
</evidence>
<evidence type="ECO:0000255" key="2">
    <source>
        <dbReference type="PROSITE-ProRule" id="PRU01067"/>
    </source>
</evidence>